<feature type="chain" id="PRO_1000121851" description="Glutamate-1-semialdehyde 2,1-aminomutase">
    <location>
        <begin position="1"/>
        <end position="430"/>
    </location>
</feature>
<feature type="modified residue" description="N6-(pyridoxal phosphate)lysine" evidence="1">
    <location>
        <position position="266"/>
    </location>
</feature>
<accession>B7JBI1</accession>
<comment type="catalytic activity">
    <reaction evidence="1">
        <text>(S)-4-amino-5-oxopentanoate = 5-aminolevulinate</text>
        <dbReference type="Rhea" id="RHEA:14265"/>
        <dbReference type="ChEBI" id="CHEBI:57501"/>
        <dbReference type="ChEBI" id="CHEBI:356416"/>
        <dbReference type="EC" id="5.4.3.8"/>
    </reaction>
</comment>
<comment type="cofactor">
    <cofactor evidence="1">
        <name>pyridoxal 5'-phosphate</name>
        <dbReference type="ChEBI" id="CHEBI:597326"/>
    </cofactor>
</comment>
<comment type="pathway">
    <text evidence="1">Porphyrin-containing compound metabolism; protoporphyrin-IX biosynthesis; 5-aminolevulinate from L-glutamyl-tRNA(Glu): step 2/2.</text>
</comment>
<comment type="subunit">
    <text evidence="1">Homodimer.</text>
</comment>
<comment type="subcellular location">
    <subcellularLocation>
        <location evidence="1">Cytoplasm</location>
    </subcellularLocation>
</comment>
<comment type="similarity">
    <text evidence="1">Belongs to the class-III pyridoxal-phosphate-dependent aminotransferase family. HemL subfamily.</text>
</comment>
<keyword id="KW-0963">Cytoplasm</keyword>
<keyword id="KW-0413">Isomerase</keyword>
<keyword id="KW-0627">Porphyrin biosynthesis</keyword>
<keyword id="KW-0663">Pyridoxal phosphate</keyword>
<keyword id="KW-1185">Reference proteome</keyword>
<reference key="1">
    <citation type="journal article" date="2008" name="BMC Genomics">
        <title>Acidithiobacillus ferrooxidans metabolism: from genome sequence to industrial applications.</title>
        <authorList>
            <person name="Valdes J."/>
            <person name="Pedroso I."/>
            <person name="Quatrini R."/>
            <person name="Dodson R.J."/>
            <person name="Tettelin H."/>
            <person name="Blake R. II"/>
            <person name="Eisen J.A."/>
            <person name="Holmes D.S."/>
        </authorList>
    </citation>
    <scope>NUCLEOTIDE SEQUENCE [LARGE SCALE GENOMIC DNA]</scope>
    <source>
        <strain>ATCC 23270 / DSM 14882 / CIP 104768 / NCIMB 8455</strain>
    </source>
</reference>
<dbReference type="EC" id="5.4.3.8" evidence="1"/>
<dbReference type="EMBL" id="CP001219">
    <property type="protein sequence ID" value="ACK79485.1"/>
    <property type="molecule type" value="Genomic_DNA"/>
</dbReference>
<dbReference type="RefSeq" id="WP_012537706.1">
    <property type="nucleotide sequence ID" value="NC_011761.1"/>
</dbReference>
<dbReference type="SMR" id="B7JBI1"/>
<dbReference type="STRING" id="243159.AFE_3303"/>
<dbReference type="PaxDb" id="243159-AFE_3303"/>
<dbReference type="GeneID" id="65282280"/>
<dbReference type="KEGG" id="afr:AFE_3303"/>
<dbReference type="eggNOG" id="COG0001">
    <property type="taxonomic scope" value="Bacteria"/>
</dbReference>
<dbReference type="HOGENOM" id="CLU_016922_1_5_6"/>
<dbReference type="UniPathway" id="UPA00251">
    <property type="reaction ID" value="UER00317"/>
</dbReference>
<dbReference type="Proteomes" id="UP000001362">
    <property type="component" value="Chromosome"/>
</dbReference>
<dbReference type="GO" id="GO:0005737">
    <property type="term" value="C:cytoplasm"/>
    <property type="evidence" value="ECO:0007669"/>
    <property type="project" value="UniProtKB-SubCell"/>
</dbReference>
<dbReference type="GO" id="GO:0042286">
    <property type="term" value="F:glutamate-1-semialdehyde 2,1-aminomutase activity"/>
    <property type="evidence" value="ECO:0007669"/>
    <property type="project" value="UniProtKB-UniRule"/>
</dbReference>
<dbReference type="GO" id="GO:0030170">
    <property type="term" value="F:pyridoxal phosphate binding"/>
    <property type="evidence" value="ECO:0007669"/>
    <property type="project" value="InterPro"/>
</dbReference>
<dbReference type="GO" id="GO:0008483">
    <property type="term" value="F:transaminase activity"/>
    <property type="evidence" value="ECO:0007669"/>
    <property type="project" value="InterPro"/>
</dbReference>
<dbReference type="GO" id="GO:0006782">
    <property type="term" value="P:protoporphyrinogen IX biosynthetic process"/>
    <property type="evidence" value="ECO:0007669"/>
    <property type="project" value="UniProtKB-UniRule"/>
</dbReference>
<dbReference type="CDD" id="cd00610">
    <property type="entry name" value="OAT_like"/>
    <property type="match status" value="1"/>
</dbReference>
<dbReference type="FunFam" id="3.40.640.10:FF:000021">
    <property type="entry name" value="Glutamate-1-semialdehyde 2,1-aminomutase"/>
    <property type="match status" value="1"/>
</dbReference>
<dbReference type="Gene3D" id="3.90.1150.10">
    <property type="entry name" value="Aspartate Aminotransferase, domain 1"/>
    <property type="match status" value="1"/>
</dbReference>
<dbReference type="Gene3D" id="3.40.640.10">
    <property type="entry name" value="Type I PLP-dependent aspartate aminotransferase-like (Major domain)"/>
    <property type="match status" value="1"/>
</dbReference>
<dbReference type="HAMAP" id="MF_00375">
    <property type="entry name" value="HemL_aminotrans_3"/>
    <property type="match status" value="1"/>
</dbReference>
<dbReference type="InterPro" id="IPR004639">
    <property type="entry name" value="4pyrrol_synth_GluAld_NH2Trfase"/>
</dbReference>
<dbReference type="InterPro" id="IPR005814">
    <property type="entry name" value="Aminotrans_3"/>
</dbReference>
<dbReference type="InterPro" id="IPR049704">
    <property type="entry name" value="Aminotrans_3_PPA_site"/>
</dbReference>
<dbReference type="InterPro" id="IPR015424">
    <property type="entry name" value="PyrdxlP-dep_Trfase"/>
</dbReference>
<dbReference type="InterPro" id="IPR015421">
    <property type="entry name" value="PyrdxlP-dep_Trfase_major"/>
</dbReference>
<dbReference type="InterPro" id="IPR015422">
    <property type="entry name" value="PyrdxlP-dep_Trfase_small"/>
</dbReference>
<dbReference type="NCBIfam" id="TIGR00713">
    <property type="entry name" value="hemL"/>
    <property type="match status" value="1"/>
</dbReference>
<dbReference type="NCBIfam" id="NF000818">
    <property type="entry name" value="PRK00062.1"/>
    <property type="match status" value="1"/>
</dbReference>
<dbReference type="PANTHER" id="PTHR43713">
    <property type="entry name" value="GLUTAMATE-1-SEMIALDEHYDE 2,1-AMINOMUTASE"/>
    <property type="match status" value="1"/>
</dbReference>
<dbReference type="PANTHER" id="PTHR43713:SF3">
    <property type="entry name" value="GLUTAMATE-1-SEMIALDEHYDE 2,1-AMINOMUTASE 1, CHLOROPLASTIC-RELATED"/>
    <property type="match status" value="1"/>
</dbReference>
<dbReference type="Pfam" id="PF00202">
    <property type="entry name" value="Aminotran_3"/>
    <property type="match status" value="1"/>
</dbReference>
<dbReference type="SUPFAM" id="SSF53383">
    <property type="entry name" value="PLP-dependent transferases"/>
    <property type="match status" value="1"/>
</dbReference>
<dbReference type="PROSITE" id="PS00600">
    <property type="entry name" value="AA_TRANSFER_CLASS_3"/>
    <property type="match status" value="1"/>
</dbReference>
<sequence>MTQTSHALFHMAQQCIPGGVNSPVRAFRGVGGDPIFIDHAEGPFFWDVEGKRYLDYVGSWGPMIHGHGHPEVLAAVHAQVNKGLGFGAPTAIEVEMAELVCALVPGIESVRMTSSGTEAVMTAIRLARGYTGRDRIIKFEGNYHGHSDSLLVKAGSGALTLGQPSSAGVPREVSQNTLVLPYNDLPAVVEMMAQFGFDVATIIVEPVAGNMGCVPPEPGFLEGLRAVCDQYGCVLIFDEVMTGFRVALGGAQALYGVRPDLTTLGKIIGGGLPVGAVGGPREIMEYLAPTGPVYQAGTLSGNPVAMAAGLATLRLLTVPGFHERLAAQTAVLCEGLAERAEAAGVPMQINHVPGMFGWFFAEQPVRGFDTVMAADSKRYARFFHGLLARGVYLAPSAYEAGFLSAAHGDTEIAATLDAAEAVLATLKEDA</sequence>
<protein>
    <recommendedName>
        <fullName evidence="1">Glutamate-1-semialdehyde 2,1-aminomutase</fullName>
        <shortName evidence="1">GSA</shortName>
        <ecNumber evidence="1">5.4.3.8</ecNumber>
    </recommendedName>
    <alternativeName>
        <fullName evidence="1">Glutamate-1-semialdehyde aminotransferase</fullName>
        <shortName evidence="1">GSA-AT</shortName>
    </alternativeName>
</protein>
<organism>
    <name type="scientific">Acidithiobacillus ferrooxidans (strain ATCC 23270 / DSM 14882 / CIP 104768 / NCIMB 8455)</name>
    <name type="common">Ferrobacillus ferrooxidans (strain ATCC 23270)</name>
    <dbReference type="NCBI Taxonomy" id="243159"/>
    <lineage>
        <taxon>Bacteria</taxon>
        <taxon>Pseudomonadati</taxon>
        <taxon>Pseudomonadota</taxon>
        <taxon>Acidithiobacillia</taxon>
        <taxon>Acidithiobacillales</taxon>
        <taxon>Acidithiobacillaceae</taxon>
        <taxon>Acidithiobacillus</taxon>
    </lineage>
</organism>
<proteinExistence type="inferred from homology"/>
<evidence type="ECO:0000255" key="1">
    <source>
        <dbReference type="HAMAP-Rule" id="MF_00375"/>
    </source>
</evidence>
<name>GSA_ACIF2</name>
<gene>
    <name evidence="1" type="primary">hemL</name>
    <name type="ordered locus">AFE_3303</name>
</gene>